<protein>
    <recommendedName>
        <fullName evidence="1">Exosome complex component Rrp41</fullName>
        <ecNumber evidence="1">3.1.13.-</ecNumber>
    </recommendedName>
</protein>
<evidence type="ECO:0000255" key="1">
    <source>
        <dbReference type="HAMAP-Rule" id="MF_00591"/>
    </source>
</evidence>
<evidence type="ECO:0000269" key="2">
    <source>
    </source>
</evidence>
<evidence type="ECO:0000269" key="3">
    <source>
    </source>
</evidence>
<evidence type="ECO:0000305" key="4">
    <source>
    </source>
</evidence>
<evidence type="ECO:0007829" key="5">
    <source>
        <dbReference type="PDB" id="3M7N"/>
    </source>
</evidence>
<organism>
    <name type="scientific">Archaeoglobus fulgidus (strain ATCC 49558 / DSM 4304 / JCM 9628 / NBRC 100126 / VC-16)</name>
    <dbReference type="NCBI Taxonomy" id="224325"/>
    <lineage>
        <taxon>Archaea</taxon>
        <taxon>Methanobacteriati</taxon>
        <taxon>Methanobacteriota</taxon>
        <taxon>Archaeoglobi</taxon>
        <taxon>Archaeoglobales</taxon>
        <taxon>Archaeoglobaceae</taxon>
        <taxon>Archaeoglobus</taxon>
    </lineage>
</organism>
<keyword id="KW-0002">3D-structure</keyword>
<keyword id="KW-0963">Cytoplasm</keyword>
<keyword id="KW-0269">Exonuclease</keyword>
<keyword id="KW-0271">Exosome</keyword>
<keyword id="KW-0378">Hydrolase</keyword>
<keyword id="KW-0540">Nuclease</keyword>
<keyword id="KW-1185">Reference proteome</keyword>
<reference key="1">
    <citation type="journal article" date="1997" name="Nature">
        <title>The complete genome sequence of the hyperthermophilic, sulphate-reducing archaeon Archaeoglobus fulgidus.</title>
        <authorList>
            <person name="Klenk H.-P."/>
            <person name="Clayton R.A."/>
            <person name="Tomb J.-F."/>
            <person name="White O."/>
            <person name="Nelson K.E."/>
            <person name="Ketchum K.A."/>
            <person name="Dodson R.J."/>
            <person name="Gwinn M.L."/>
            <person name="Hickey E.K."/>
            <person name="Peterson J.D."/>
            <person name="Richardson D.L."/>
            <person name="Kerlavage A.R."/>
            <person name="Graham D.E."/>
            <person name="Kyrpides N.C."/>
            <person name="Fleischmann R.D."/>
            <person name="Quackenbush J."/>
            <person name="Lee N.H."/>
            <person name="Sutton G.G."/>
            <person name="Gill S.R."/>
            <person name="Kirkness E.F."/>
            <person name="Dougherty B.A."/>
            <person name="McKenney K."/>
            <person name="Adams M.D."/>
            <person name="Loftus B.J."/>
            <person name="Peterson S.N."/>
            <person name="Reich C.I."/>
            <person name="McNeil L.K."/>
            <person name="Badger J.H."/>
            <person name="Glodek A."/>
            <person name="Zhou L."/>
            <person name="Overbeek R."/>
            <person name="Gocayne J.D."/>
            <person name="Weidman J.F."/>
            <person name="McDonald L.A."/>
            <person name="Utterback T.R."/>
            <person name="Cotton M.D."/>
            <person name="Spriggs T."/>
            <person name="Artiach P."/>
            <person name="Kaine B.P."/>
            <person name="Sykes S.M."/>
            <person name="Sadow P.W."/>
            <person name="D'Andrea K.P."/>
            <person name="Bowman C."/>
            <person name="Fujii C."/>
            <person name="Garland S.A."/>
            <person name="Mason T.M."/>
            <person name="Olsen G.J."/>
            <person name="Fraser C.M."/>
            <person name="Smith H.O."/>
            <person name="Woese C.R."/>
            <person name="Venter J.C."/>
        </authorList>
    </citation>
    <scope>NUCLEOTIDE SEQUENCE [LARGE SCALE GENOMIC DNA]</scope>
    <source>
        <strain>ATCC 49558 / DSM 4304 / JCM 9628 / NBRC 100126 / VC-16</strain>
    </source>
</reference>
<reference key="2">
    <citation type="journal article" date="2005" name="Mol. Cell">
        <title>Structural framework for the mechanism of archaeal exosomes in RNA processing.</title>
        <authorList>
            <person name="Buttner K."/>
            <person name="Wenig K."/>
            <person name="Hopfner K.P."/>
        </authorList>
    </citation>
    <scope>X-RAY CRYSTALLOGRAPHY (2.70 ANGSTROMS) IN COMPLEX WITH RRP42; RRP4 AND CSL4</scope>
    <scope>FUNCTION</scope>
    <scope>SUBUNIT</scope>
    <scope>MUTAGENESIS OF ARG-65 AND ASP-180</scope>
</reference>
<reference key="3">
    <citation type="journal article" date="2010" name="Nucleic Acids Res.">
        <title>Quantitative analysis of processive RNA degradation by the archaeal RNA exosome.</title>
        <authorList>
            <person name="Hartung S."/>
            <person name="Niederberger T."/>
            <person name="Hartung M."/>
            <person name="Tresch A."/>
            <person name="Hopfner K.P."/>
        </authorList>
    </citation>
    <scope>X-RAY CRYSTALLOGRAPHY (2.40 ANGSTROMS) IN COMPLEX WITH RRP42 AND CSL4</scope>
    <scope>SUBUNIT</scope>
</reference>
<sequence length="258" mass="28847">MSEFNEKPEKLIVDGLRLDGRKFDELRPIKIEASVLKRADGSCYLEMGKNKVIAAVFGPREVHPRHLQDPSKAIIRYRYNMAPFSVEERKRPGPDRRSIEISKVSKEAFEAVIMKELFPRSAIDIFVEVLQADAGSRTACLNAASVALVDAGVPMKGMITSVAVGKADGQLVLDPMKEEDNFGEADMPFAFLIRNGKIESIALLQMDGRMTRDEVKQAIELAKKGALQIYEMQREAILRRYIEVGEEMDEITEGGEDA</sequence>
<gene>
    <name evidence="1" type="primary">rrp41</name>
    <name type="ordered locus">AF_0493</name>
</gene>
<dbReference type="EC" id="3.1.13.-" evidence="1"/>
<dbReference type="EMBL" id="AE000782">
    <property type="protein sequence ID" value="AAB90744.1"/>
    <property type="molecule type" value="Genomic_DNA"/>
</dbReference>
<dbReference type="PIR" id="E69311">
    <property type="entry name" value="E69311"/>
</dbReference>
<dbReference type="RefSeq" id="WP_010878000.1">
    <property type="nucleotide sequence ID" value="NC_000917.1"/>
</dbReference>
<dbReference type="PDB" id="2BA0">
    <property type="method" value="X-ray"/>
    <property type="resolution" value="2.70 A"/>
    <property type="chains" value="D/E/F=1-258"/>
</dbReference>
<dbReference type="PDB" id="2BA1">
    <property type="method" value="X-ray"/>
    <property type="resolution" value="2.70 A"/>
    <property type="chains" value="D/E/F=1-258"/>
</dbReference>
<dbReference type="PDB" id="3M7N">
    <property type="method" value="X-ray"/>
    <property type="resolution" value="2.40 A"/>
    <property type="chains" value="D/E/F=1-258"/>
</dbReference>
<dbReference type="PDB" id="3M85">
    <property type="method" value="X-ray"/>
    <property type="resolution" value="3.00 A"/>
    <property type="chains" value="D/E/F=1-258"/>
</dbReference>
<dbReference type="PDBsum" id="2BA0"/>
<dbReference type="PDBsum" id="2BA1"/>
<dbReference type="PDBsum" id="3M7N"/>
<dbReference type="PDBsum" id="3M85"/>
<dbReference type="SMR" id="O29757"/>
<dbReference type="STRING" id="224325.AF_0493"/>
<dbReference type="PaxDb" id="224325-AF_0493"/>
<dbReference type="EnsemblBacteria" id="AAB90744">
    <property type="protein sequence ID" value="AAB90744"/>
    <property type="gene ID" value="AF_0493"/>
</dbReference>
<dbReference type="GeneID" id="24794033"/>
<dbReference type="KEGG" id="afu:AF_0493"/>
<dbReference type="eggNOG" id="arCOG01575">
    <property type="taxonomic scope" value="Archaea"/>
</dbReference>
<dbReference type="HOGENOM" id="CLU_063514_0_0_2"/>
<dbReference type="OrthoDB" id="24266at2157"/>
<dbReference type="PhylomeDB" id="O29757"/>
<dbReference type="EvolutionaryTrace" id="O29757"/>
<dbReference type="Proteomes" id="UP000002199">
    <property type="component" value="Chromosome"/>
</dbReference>
<dbReference type="GO" id="GO:0000177">
    <property type="term" value="C:cytoplasmic exosome (RNase complex)"/>
    <property type="evidence" value="ECO:0007669"/>
    <property type="project" value="TreeGrafter"/>
</dbReference>
<dbReference type="GO" id="GO:0000175">
    <property type="term" value="F:3'-5'-RNA exonuclease activity"/>
    <property type="evidence" value="ECO:0007669"/>
    <property type="project" value="UniProtKB-UniRule"/>
</dbReference>
<dbReference type="GO" id="GO:0003723">
    <property type="term" value="F:RNA binding"/>
    <property type="evidence" value="ECO:0007669"/>
    <property type="project" value="TreeGrafter"/>
</dbReference>
<dbReference type="GO" id="GO:0010467">
    <property type="term" value="P:gene expression"/>
    <property type="evidence" value="ECO:0007669"/>
    <property type="project" value="UniProtKB-ARBA"/>
</dbReference>
<dbReference type="GO" id="GO:0016075">
    <property type="term" value="P:rRNA catabolic process"/>
    <property type="evidence" value="ECO:0007669"/>
    <property type="project" value="TreeGrafter"/>
</dbReference>
<dbReference type="CDD" id="cd11366">
    <property type="entry name" value="RNase_PH_archRRP41"/>
    <property type="match status" value="1"/>
</dbReference>
<dbReference type="FunFam" id="3.30.230.70:FF:000004">
    <property type="entry name" value="Exosome complex component Rrp41"/>
    <property type="match status" value="1"/>
</dbReference>
<dbReference type="Gene3D" id="3.30.230.70">
    <property type="entry name" value="GHMP Kinase, N-terminal domain"/>
    <property type="match status" value="1"/>
</dbReference>
<dbReference type="HAMAP" id="MF_00591">
    <property type="entry name" value="Exosome_Rrp41"/>
    <property type="match status" value="1"/>
</dbReference>
<dbReference type="InterPro" id="IPR001247">
    <property type="entry name" value="ExoRNase_PH_dom1"/>
</dbReference>
<dbReference type="InterPro" id="IPR015847">
    <property type="entry name" value="ExoRNase_PH_dom2"/>
</dbReference>
<dbReference type="InterPro" id="IPR036345">
    <property type="entry name" value="ExoRNase_PH_dom2_sf"/>
</dbReference>
<dbReference type="InterPro" id="IPR027408">
    <property type="entry name" value="PNPase/RNase_PH_dom_sf"/>
</dbReference>
<dbReference type="InterPro" id="IPR020568">
    <property type="entry name" value="Ribosomal_Su5_D2-typ_SF"/>
</dbReference>
<dbReference type="InterPro" id="IPR050080">
    <property type="entry name" value="RNase_PH"/>
</dbReference>
<dbReference type="InterPro" id="IPR011807">
    <property type="entry name" value="Rrp41"/>
</dbReference>
<dbReference type="NCBIfam" id="TIGR02065">
    <property type="entry name" value="ECX1"/>
    <property type="match status" value="1"/>
</dbReference>
<dbReference type="PANTHER" id="PTHR11953">
    <property type="entry name" value="EXOSOME COMPLEX COMPONENT"/>
    <property type="match status" value="1"/>
</dbReference>
<dbReference type="PANTHER" id="PTHR11953:SF0">
    <property type="entry name" value="EXOSOME COMPLEX COMPONENT RRP41"/>
    <property type="match status" value="1"/>
</dbReference>
<dbReference type="Pfam" id="PF01138">
    <property type="entry name" value="RNase_PH"/>
    <property type="match status" value="1"/>
</dbReference>
<dbReference type="Pfam" id="PF03725">
    <property type="entry name" value="RNase_PH_C"/>
    <property type="match status" value="1"/>
</dbReference>
<dbReference type="SUPFAM" id="SSF55666">
    <property type="entry name" value="Ribonuclease PH domain 2-like"/>
    <property type="match status" value="1"/>
</dbReference>
<dbReference type="SUPFAM" id="SSF54211">
    <property type="entry name" value="Ribosomal protein S5 domain 2-like"/>
    <property type="match status" value="1"/>
</dbReference>
<name>RRP41_ARCFU</name>
<feature type="chain" id="PRO_0000139981" description="Exosome complex component Rrp41">
    <location>
        <begin position="1"/>
        <end position="258"/>
    </location>
</feature>
<feature type="mutagenesis site" description="Reduces RNA degradation more than 90%. Abolishes RNA binding by the Rrp41-Rrp42 ring." evidence="2">
    <original>R</original>
    <variation>E</variation>
    <location>
        <position position="65"/>
    </location>
</feature>
<feature type="mutagenesis site" description="Abolishes exoribonuclease activity." evidence="2">
    <original>D</original>
    <variation>A</variation>
    <location>
        <position position="180"/>
    </location>
</feature>
<feature type="strand" evidence="5">
    <location>
        <begin position="11"/>
        <end position="13"/>
    </location>
</feature>
<feature type="strand" evidence="5">
    <location>
        <begin position="29"/>
        <end position="33"/>
    </location>
</feature>
<feature type="strand" evidence="5">
    <location>
        <begin position="37"/>
        <end position="47"/>
    </location>
</feature>
<feature type="strand" evidence="5">
    <location>
        <begin position="50"/>
        <end position="61"/>
    </location>
</feature>
<feature type="strand" evidence="5">
    <location>
        <begin position="63"/>
        <end position="65"/>
    </location>
</feature>
<feature type="strand" evidence="5">
    <location>
        <begin position="70"/>
        <end position="72"/>
    </location>
</feature>
<feature type="strand" evidence="5">
    <location>
        <begin position="74"/>
        <end position="81"/>
    </location>
</feature>
<feature type="helix" evidence="5">
    <location>
        <begin position="83"/>
        <end position="85"/>
    </location>
</feature>
<feature type="strand" evidence="5">
    <location>
        <begin position="86"/>
        <end position="88"/>
    </location>
</feature>
<feature type="helix" evidence="5">
    <location>
        <begin position="96"/>
        <end position="110"/>
    </location>
</feature>
<feature type="helix" evidence="5">
    <location>
        <begin position="115"/>
        <end position="117"/>
    </location>
</feature>
<feature type="strand" evidence="5">
    <location>
        <begin position="121"/>
        <end position="131"/>
    </location>
</feature>
<feature type="helix" evidence="5">
    <location>
        <begin position="136"/>
        <end position="150"/>
    </location>
</feature>
<feature type="strand" evidence="5">
    <location>
        <begin position="155"/>
        <end position="167"/>
    </location>
</feature>
<feature type="strand" evidence="5">
    <location>
        <begin position="170"/>
        <end position="174"/>
    </location>
</feature>
<feature type="helix" evidence="5">
    <location>
        <begin position="177"/>
        <end position="182"/>
    </location>
</feature>
<feature type="strand" evidence="5">
    <location>
        <begin position="183"/>
        <end position="194"/>
    </location>
</feature>
<feature type="strand" evidence="5">
    <location>
        <begin position="197"/>
        <end position="210"/>
    </location>
</feature>
<feature type="helix" evidence="5">
    <location>
        <begin position="212"/>
        <end position="249"/>
    </location>
</feature>
<comment type="function">
    <text evidence="4">Catalytic component of the exosome, which is a complex involved in RNA degradation. Has 3'-&gt;5' exoribonuclease activity. Can also synthesize heteromeric RNA-tails (Probable).</text>
</comment>
<comment type="subunit">
    <text evidence="1 2 3">Component of the archaeal exosome complex. Forms a hexameric ring-like arrangement composed of 3 Rrp41-Rrp42 heterodimers. The hexameric ring associates with a trimer of Rrp4 and/or Csl4 subunits.</text>
</comment>
<comment type="subcellular location">
    <subcellularLocation>
        <location evidence="1">Cytoplasm</location>
    </subcellularLocation>
</comment>
<comment type="similarity">
    <text evidence="1">Belongs to the RNase PH family. Rrp41 subfamily.</text>
</comment>
<proteinExistence type="evidence at protein level"/>
<accession>O29757</accession>